<protein>
    <recommendedName>
        <fullName>Lysosome membrane protein 2</fullName>
    </recommendedName>
    <alternativeName>
        <fullName>85 kDa lysosomal membrane sialoglycoprotein</fullName>
        <shortName>LGP85</shortName>
    </alternativeName>
    <alternativeName>
        <fullName>Lysosome membrane protein II</fullName>
        <shortName>LIMP II</shortName>
    </alternativeName>
    <alternativeName>
        <fullName>Scavenger receptor class B member 2</fullName>
    </alternativeName>
</protein>
<keyword id="KW-0903">Direct protein sequencing</keyword>
<keyword id="KW-1015">Disulfide bond</keyword>
<keyword id="KW-0325">Glycoprotein</keyword>
<keyword id="KW-0449">Lipoprotein</keyword>
<keyword id="KW-0458">Lysosome</keyword>
<keyword id="KW-0472">Membrane</keyword>
<keyword id="KW-0564">Palmitate</keyword>
<keyword id="KW-0675">Receptor</keyword>
<keyword id="KW-1185">Reference proteome</keyword>
<keyword id="KW-0812">Transmembrane</keyword>
<keyword id="KW-1133">Transmembrane helix</keyword>
<sequence>MGRCCFYTAGTLSLLLLVTSVTLLVARVFQKAVDQTIEKNMVLQNGTKVFNSWEKPPLPVYIQFYFFNVTNPEEILQGEIPLLEEVGPYTYRELRNKANIQFGENGTTISAVTNKAYVFERNQSVGDPNVDLIRTINIPLLTVVDLAQLTLLRELIEAMLKAYQQKLFVIHTVHELLWGYKDEILSLVHIFKPDVSPNFGLFYERNGTNDGEYVFLTGEDNYLNFSKIVEWNGKTSLDWWTTDTCNMINGTDGDSFHPLISKDEVLYLFPSDLCRSVHITFSSFENVEGLPAFRYKVPAEILANTSENAGFCIPEGNCMDSGVLNISICKNGAPIIMSFPHFYQADEKFVSAIKGMHPNKEEHESFVDINPLTGIILRGAKRFQINTYVRKLDDFVETGDIRTMVFPVMYLNESVLIDKETANQLKSVINTTLVVTNIPYIIMALGVFFGLVFTWLACRGQGSMDEGTADERAPLIRT</sequence>
<dbReference type="EMBL" id="AB008553">
    <property type="protein sequence ID" value="BAA23372.1"/>
    <property type="molecule type" value="mRNA"/>
</dbReference>
<dbReference type="EMBL" id="AK011123">
    <property type="protein sequence ID" value="BAB27416.1"/>
    <property type="molecule type" value="mRNA"/>
</dbReference>
<dbReference type="EMBL" id="AK083038">
    <property type="protein sequence ID" value="BAC38740.1"/>
    <property type="molecule type" value="mRNA"/>
</dbReference>
<dbReference type="EMBL" id="AK144235">
    <property type="protein sequence ID" value="BAE25789.1"/>
    <property type="molecule type" value="mRNA"/>
</dbReference>
<dbReference type="EMBL" id="BC029073">
    <property type="protein sequence ID" value="AAH29073.1"/>
    <property type="molecule type" value="mRNA"/>
</dbReference>
<dbReference type="CCDS" id="CCDS19431.1"/>
<dbReference type="PIR" id="JC5670">
    <property type="entry name" value="JC5670"/>
</dbReference>
<dbReference type="RefSeq" id="NP_031670.1">
    <property type="nucleotide sequence ID" value="NM_007644.4"/>
</dbReference>
<dbReference type="SMR" id="O35114"/>
<dbReference type="BioGRID" id="198588">
    <property type="interactions" value="3"/>
</dbReference>
<dbReference type="FunCoup" id="O35114">
    <property type="interactions" value="851"/>
</dbReference>
<dbReference type="IntAct" id="O35114">
    <property type="interactions" value="2"/>
</dbReference>
<dbReference type="STRING" id="10090.ENSMUSP00000031377"/>
<dbReference type="TCDB" id="9.B.39.1.9">
    <property type="family name" value="the long chain fatty acid translocase (lcfat) family"/>
</dbReference>
<dbReference type="GlyConnect" id="2497">
    <property type="glycosylation" value="9 N-Linked glycans (2 sites)"/>
</dbReference>
<dbReference type="GlyCosmos" id="O35114">
    <property type="glycosylation" value="11 sites, 8 glycans"/>
</dbReference>
<dbReference type="GlyGen" id="O35114">
    <property type="glycosylation" value="12 sites, 13 N-linked glycans (5 sites), 1 O-linked glycan (1 site)"/>
</dbReference>
<dbReference type="iPTMnet" id="O35114"/>
<dbReference type="PhosphoSitePlus" id="O35114"/>
<dbReference type="SwissPalm" id="O35114"/>
<dbReference type="jPOST" id="O35114"/>
<dbReference type="PaxDb" id="10090-ENSMUSP00000031377"/>
<dbReference type="PeptideAtlas" id="O35114"/>
<dbReference type="ProteomicsDB" id="256714"/>
<dbReference type="Pumba" id="O35114"/>
<dbReference type="Antibodypedia" id="3014">
    <property type="antibodies" value="422 antibodies from 37 providers"/>
</dbReference>
<dbReference type="DNASU" id="12492"/>
<dbReference type="Ensembl" id="ENSMUST00000031377.9">
    <property type="protein sequence ID" value="ENSMUSP00000031377.8"/>
    <property type="gene ID" value="ENSMUSG00000029426.9"/>
</dbReference>
<dbReference type="GeneID" id="12492"/>
<dbReference type="KEGG" id="mmu:12492"/>
<dbReference type="UCSC" id="uc008ydm.1">
    <property type="organism name" value="mouse"/>
</dbReference>
<dbReference type="AGR" id="MGI:1196458"/>
<dbReference type="CTD" id="950"/>
<dbReference type="MGI" id="MGI:1196458">
    <property type="gene designation" value="Scarb2"/>
</dbReference>
<dbReference type="VEuPathDB" id="HostDB:ENSMUSG00000029426"/>
<dbReference type="eggNOG" id="KOG3776">
    <property type="taxonomic scope" value="Eukaryota"/>
</dbReference>
<dbReference type="GeneTree" id="ENSGT00940000153372"/>
<dbReference type="HOGENOM" id="CLU_019853_3_0_1"/>
<dbReference type="InParanoid" id="O35114"/>
<dbReference type="OMA" id="DVFGMRP"/>
<dbReference type="OrthoDB" id="18585at2759"/>
<dbReference type="PhylomeDB" id="O35114"/>
<dbReference type="TreeFam" id="TF317925"/>
<dbReference type="Reactome" id="R-MMU-8856825">
    <property type="pathway name" value="Cargo recognition for clathrin-mediated endocytosis"/>
</dbReference>
<dbReference type="Reactome" id="R-MMU-8856828">
    <property type="pathway name" value="Clathrin-mediated endocytosis"/>
</dbReference>
<dbReference type="BioGRID-ORCS" id="12492">
    <property type="hits" value="3 hits in 77 CRISPR screens"/>
</dbReference>
<dbReference type="ChiTaRS" id="Scarb2">
    <property type="organism name" value="mouse"/>
</dbReference>
<dbReference type="PRO" id="PR:O35114"/>
<dbReference type="Proteomes" id="UP000000589">
    <property type="component" value="Chromosome 5"/>
</dbReference>
<dbReference type="RNAct" id="O35114">
    <property type="molecule type" value="protein"/>
</dbReference>
<dbReference type="Bgee" id="ENSMUSG00000029426">
    <property type="expression patterns" value="Expressed in urinary bladder urothelium and 258 other cell types or tissues"/>
</dbReference>
<dbReference type="GO" id="GO:0030666">
    <property type="term" value="C:endocytic vesicle membrane"/>
    <property type="evidence" value="ECO:0000314"/>
    <property type="project" value="ARUK-UCL"/>
</dbReference>
<dbReference type="GO" id="GO:0043202">
    <property type="term" value="C:lysosomal lumen"/>
    <property type="evidence" value="ECO:0000314"/>
    <property type="project" value="BHF-UCL"/>
</dbReference>
<dbReference type="GO" id="GO:0005765">
    <property type="term" value="C:lysosomal membrane"/>
    <property type="evidence" value="ECO:0000314"/>
    <property type="project" value="BHF-UCL"/>
</dbReference>
<dbReference type="GO" id="GO:0005886">
    <property type="term" value="C:plasma membrane"/>
    <property type="evidence" value="ECO:0000314"/>
    <property type="project" value="ARUK-UCL"/>
</dbReference>
<dbReference type="GO" id="GO:0038024">
    <property type="term" value="F:cargo receptor activity"/>
    <property type="evidence" value="ECO:0000315"/>
    <property type="project" value="ARUK-UCL"/>
</dbReference>
<dbReference type="GO" id="GO:0015485">
    <property type="term" value="F:cholesterol binding"/>
    <property type="evidence" value="ECO:0000314"/>
    <property type="project" value="ARUK-UCL"/>
</dbReference>
<dbReference type="GO" id="GO:0019899">
    <property type="term" value="F:enzyme binding"/>
    <property type="evidence" value="ECO:0000353"/>
    <property type="project" value="BHF-UCL"/>
</dbReference>
<dbReference type="GO" id="GO:0031210">
    <property type="term" value="F:phosphatidylcholine binding"/>
    <property type="evidence" value="ECO:0000314"/>
    <property type="project" value="ARUK-UCL"/>
</dbReference>
<dbReference type="GO" id="GO:0001786">
    <property type="term" value="F:phosphatidylserine binding"/>
    <property type="evidence" value="ECO:0000314"/>
    <property type="project" value="ARUK-UCL"/>
</dbReference>
<dbReference type="GO" id="GO:0042803">
    <property type="term" value="F:protein homodimerization activity"/>
    <property type="evidence" value="ECO:0000353"/>
    <property type="project" value="ARUK-UCL"/>
</dbReference>
<dbReference type="GO" id="GO:0051087">
    <property type="term" value="F:protein-folding chaperone binding"/>
    <property type="evidence" value="ECO:0000353"/>
    <property type="project" value="UniProtKB"/>
</dbReference>
<dbReference type="GO" id="GO:0005044">
    <property type="term" value="F:scavenger receptor activity"/>
    <property type="evidence" value="ECO:0000314"/>
    <property type="project" value="ARUK-UCL"/>
</dbReference>
<dbReference type="GO" id="GO:0015917">
    <property type="term" value="P:aminophospholipid transport"/>
    <property type="evidence" value="ECO:0000314"/>
    <property type="project" value="ARUK-UCL"/>
</dbReference>
<dbReference type="GO" id="GO:0099638">
    <property type="term" value="P:endosome to plasma membrane protein transport"/>
    <property type="evidence" value="ECO:0000315"/>
    <property type="project" value="MGI"/>
</dbReference>
<dbReference type="GO" id="GO:0006622">
    <property type="term" value="P:protein targeting to lysosome"/>
    <property type="evidence" value="ECO:0000315"/>
    <property type="project" value="BHF-UCL"/>
</dbReference>
<dbReference type="GO" id="GO:0006898">
    <property type="term" value="P:receptor-mediated endocytosis"/>
    <property type="evidence" value="ECO:0000314"/>
    <property type="project" value="ARUK-UCL"/>
</dbReference>
<dbReference type="GO" id="GO:0043470">
    <property type="term" value="P:regulation of carbohydrate catabolic process"/>
    <property type="evidence" value="ECO:0000315"/>
    <property type="project" value="ARUK-UCL"/>
</dbReference>
<dbReference type="GO" id="GO:1905123">
    <property type="term" value="P:regulation of glucosylceramidase activity"/>
    <property type="evidence" value="ECO:0000315"/>
    <property type="project" value="ParkinsonsUK-UCL"/>
</dbReference>
<dbReference type="GO" id="GO:0007605">
    <property type="term" value="P:sensory perception of sound"/>
    <property type="evidence" value="ECO:0000315"/>
    <property type="project" value="MGI"/>
</dbReference>
<dbReference type="InterPro" id="IPR002159">
    <property type="entry name" value="CD36_fam"/>
</dbReference>
<dbReference type="InterPro" id="IPR005429">
    <property type="entry name" value="LimpII"/>
</dbReference>
<dbReference type="PANTHER" id="PTHR11923:SF51">
    <property type="entry name" value="LYSOSOME MEMBRANE PROTEIN 2"/>
    <property type="match status" value="1"/>
</dbReference>
<dbReference type="PANTHER" id="PTHR11923">
    <property type="entry name" value="SCAVENGER RECEPTOR CLASS B TYPE-1 SR-B1"/>
    <property type="match status" value="1"/>
</dbReference>
<dbReference type="Pfam" id="PF01130">
    <property type="entry name" value="CD36"/>
    <property type="match status" value="1"/>
</dbReference>
<dbReference type="PRINTS" id="PR01609">
    <property type="entry name" value="CD36FAMILY"/>
</dbReference>
<dbReference type="PRINTS" id="PR01611">
    <property type="entry name" value="LIMPII"/>
</dbReference>
<feature type="chain" id="PRO_0000144156" description="Lysosome membrane protein 2">
    <location>
        <begin position="1"/>
        <end position="478"/>
    </location>
</feature>
<feature type="topological domain" description="Cytoplasmic" evidence="2">
    <location>
        <begin position="1"/>
        <end position="4"/>
    </location>
</feature>
<feature type="transmembrane region" description="Helical" evidence="2">
    <location>
        <begin position="5"/>
        <end position="27"/>
    </location>
</feature>
<feature type="topological domain" description="Lumenal" evidence="2">
    <location>
        <begin position="28"/>
        <end position="433"/>
    </location>
</feature>
<feature type="transmembrane region" description="Helical" evidence="2">
    <location>
        <begin position="434"/>
        <end position="459"/>
    </location>
</feature>
<feature type="topological domain" description="Cytoplasmic" evidence="2">
    <location>
        <begin position="460"/>
        <end position="478"/>
    </location>
</feature>
<feature type="region of interest" description="Important for interaction with GBA1">
    <location>
        <begin position="155"/>
        <end position="191"/>
    </location>
</feature>
<feature type="glycosylation site" description="N-linked (GlcNAc...) asparagine" evidence="2">
    <location>
        <position position="45"/>
    </location>
</feature>
<feature type="glycosylation site" description="N-linked (GlcNAc...) asparagine" evidence="2">
    <location>
        <position position="68"/>
    </location>
</feature>
<feature type="glycosylation site" description="N-linked (GlcNAc...) asparagine" evidence="4">
    <location>
        <position position="105"/>
    </location>
</feature>
<feature type="glycosylation site" description="N-linked (GlcNAc...) asparagine" evidence="2">
    <location>
        <position position="122"/>
    </location>
</feature>
<feature type="glycosylation site" description="N-linked (GlcNAc...) asparagine" evidence="2">
    <location>
        <position position="206"/>
    </location>
</feature>
<feature type="glycosylation site" description="N-linked (GlcNAc...) asparagine" evidence="2">
    <location>
        <position position="224"/>
    </location>
</feature>
<feature type="glycosylation site" description="N-linked (GlcNAc...) asparagine" evidence="2">
    <location>
        <position position="249"/>
    </location>
</feature>
<feature type="glycosylation site" description="N-linked (GlcNAc...) asparagine" evidence="2">
    <location>
        <position position="304"/>
    </location>
</feature>
<feature type="glycosylation site" description="N-linked (GlcNAc...) asparagine" evidence="2">
    <location>
        <position position="325"/>
    </location>
</feature>
<feature type="glycosylation site" description="N-linked (GlcNAc...) asparagine" evidence="2">
    <location>
        <position position="412"/>
    </location>
</feature>
<feature type="glycosylation site" description="N-linked (GlcNAc...) asparagine" evidence="2">
    <location>
        <position position="430"/>
    </location>
</feature>
<feature type="disulfide bond" evidence="1">
    <location>
        <begin position="274"/>
        <end position="329"/>
    </location>
</feature>
<feature type="disulfide bond" evidence="1">
    <location>
        <begin position="312"/>
        <end position="318"/>
    </location>
</feature>
<feature type="mutagenesis site" description="Loss of glycosylation site. No effect on normal location in lysosomes." evidence="5">
    <original>N</original>
    <variation>Q</variation>
    <location>
        <position position="45"/>
    </location>
</feature>
<feature type="mutagenesis site" description="Loss of glycosylation site. Causes retention in the endoplasmic reticulum and abolishes normal location in lysosomes." evidence="5">
    <original>N</original>
    <variation>Q</variation>
    <location>
        <position position="68"/>
    </location>
</feature>
<feature type="mutagenesis site" description="Loss of glycosylation site. No effect on normal location in lysosomes." evidence="5">
    <original>N</original>
    <variation>Q</variation>
    <location>
        <position position="105"/>
    </location>
</feature>
<feature type="mutagenesis site" description="Loss of glycosylation site. No effect on normal location in lysosomes." evidence="5">
    <original>N</original>
    <variation>Q</variation>
    <location>
        <position position="122"/>
    </location>
</feature>
<feature type="mutagenesis site" description="Abolishes interaction with GBA1. No effect on normal location in lysosomes." evidence="5">
    <original>L</original>
    <variation>D</variation>
    <location>
        <position position="155"/>
    </location>
</feature>
<feature type="mutagenesis site" description="Abolishes interaction with GBA1. No effect on normal location in lysosomes." evidence="5">
    <original>I</original>
    <variation>D</variation>
    <location>
        <position position="156"/>
    </location>
</feature>
<feature type="mutagenesis site" description="Abolishes interaction with GBA1. No effect on normal location in lysosomes." evidence="5">
    <original>M</original>
    <variation>D</variation>
    <location>
        <position position="159"/>
    </location>
</feature>
<feature type="mutagenesis site" description="Abolishes interaction with GBA1. No effect on normal location in lysosomes." evidence="5">
    <original>L</original>
    <variation>D</variation>
    <location>
        <position position="160"/>
    </location>
</feature>
<feature type="mutagenesis site" description="Abolishes interaction with GBA1. No effect on normal location in lysosomes." evidence="5">
    <original>A</original>
    <variation>D</variation>
    <location>
        <position position="162"/>
    </location>
</feature>
<feature type="mutagenesis site" description="Abolishes interaction with GBA1. No effect on normal location in lysosomes." evidence="5">
    <original>Y</original>
    <variation>D</variation>
    <location>
        <position position="163"/>
    </location>
</feature>
<feature type="mutagenesis site" description="Abolishes interaction with GBA1. No effect on normal location in lysosomes." evidence="5">
    <original>K</original>
    <variation>D</variation>
    <location>
        <position position="166"/>
    </location>
</feature>
<feature type="mutagenesis site" description="Abolishes interaction with GBA1. No effect on normal location in lysosomes." evidence="5">
    <original>I</original>
    <variation>D</variation>
    <location>
        <position position="184"/>
    </location>
</feature>
<feature type="mutagenesis site" description="Abolishes interaction with GBA1. No effect on normal location in lysosomes." evidence="5">
    <original>L</original>
    <variation>D</variation>
    <location>
        <position position="187"/>
    </location>
</feature>
<feature type="mutagenesis site" description="Abolishes interaction with GBA1. No effect on normal location in lysosomes." evidence="5">
    <original>F</original>
    <variation>D</variation>
    <location>
        <position position="191"/>
    </location>
</feature>
<feature type="mutagenesis site" description="Loss of glycosylation site. No effect on normal location in lysosomes." evidence="5">
    <original>N</original>
    <variation>Q</variation>
    <location>
        <position position="206"/>
    </location>
</feature>
<feature type="mutagenesis site" description="Loss of glycosylation site. No effect on normal location in lysosomes." evidence="5">
    <original>N</original>
    <variation>Q</variation>
    <location>
        <position position="224"/>
    </location>
</feature>
<feature type="mutagenesis site" description="Loss of glycosylation site. No effect on normal location in lysosomes." evidence="5">
    <original>N</original>
    <variation>Q</variation>
    <location>
        <position position="249"/>
    </location>
</feature>
<feature type="mutagenesis site" description="Loss of glycosylation site. No effect on normal location in lysosomes." evidence="5">
    <original>N</original>
    <variation>Q</variation>
    <location>
        <position position="304"/>
    </location>
</feature>
<feature type="mutagenesis site" description="Loss of glycosylation site. Causes retention in the endoplasmic reticulum and abolishes normal location in lysosomes." evidence="5">
    <original>N</original>
    <variation>Q</variation>
    <location>
        <position position="325"/>
    </location>
</feature>
<feature type="mutagenesis site" description="Slightly increased GBA1 binding. No effect on normal location in lysosomes." evidence="5">
    <original>D</original>
    <variation>K</variation>
    <location>
        <position position="400"/>
    </location>
</feature>
<feature type="mutagenesis site" description="Loss of glycosylation site. No effect on normal location in lysosomes." evidence="5">
    <original>N</original>
    <variation>Q</variation>
    <location>
        <position position="412"/>
    </location>
</feature>
<feature type="mutagenesis site" description="Loss of glycosylation site. No effect on normal location in lysosomes." evidence="5">
    <original>N</original>
    <variation>Q</variation>
    <location>
        <position position="430"/>
    </location>
</feature>
<accession>O35114</accession>
<accession>Q3UNF8</accession>
<gene>
    <name type="primary">Scarb2</name>
</gene>
<comment type="function">
    <text evidence="3 5">Acts as a lysosomal receptor for glucosylceramidase (GBA1) targeting.</text>
</comment>
<comment type="subunit">
    <text evidence="3 5">Interacts with GBA1.</text>
</comment>
<comment type="subcellular location">
    <subcellularLocation>
        <location evidence="5 6">Lysosome membrane</location>
        <topology evidence="5 6">Multi-pass membrane protein</topology>
    </subcellularLocation>
</comment>
<comment type="tissue specificity">
    <text>Detected in the extracts of brain, heart, lung, liver and kidney.</text>
</comment>
<comment type="PTM">
    <text evidence="1">Acylated by palmitic acid group(s).</text>
</comment>
<comment type="PTM">
    <text evidence="4">Heavily glycosylated.</text>
</comment>
<comment type="similarity">
    <text evidence="7">Belongs to the CD36 family.</text>
</comment>
<proteinExistence type="evidence at protein level"/>
<organism>
    <name type="scientific">Mus musculus</name>
    <name type="common">Mouse</name>
    <dbReference type="NCBI Taxonomy" id="10090"/>
    <lineage>
        <taxon>Eukaryota</taxon>
        <taxon>Metazoa</taxon>
        <taxon>Chordata</taxon>
        <taxon>Craniata</taxon>
        <taxon>Vertebrata</taxon>
        <taxon>Euteleostomi</taxon>
        <taxon>Mammalia</taxon>
        <taxon>Eutheria</taxon>
        <taxon>Euarchontoglires</taxon>
        <taxon>Glires</taxon>
        <taxon>Rodentia</taxon>
        <taxon>Myomorpha</taxon>
        <taxon>Muroidea</taxon>
        <taxon>Muridae</taxon>
        <taxon>Murinae</taxon>
        <taxon>Mus</taxon>
        <taxon>Mus</taxon>
    </lineage>
</organism>
<reference key="1">
    <citation type="journal article" date="1997" name="J. Biochem.">
        <title>Identification and characterization of a major lysosomal membrane glycoprotein, LGP85/LIMP II in mouse liver.</title>
        <authorList>
            <person name="Tabuchi N."/>
            <person name="Akasaki K."/>
            <person name="Sasaki T."/>
            <person name="Kanda N."/>
            <person name="Tsuji H."/>
        </authorList>
    </citation>
    <scope>NUCLEOTIDE SEQUENCE [MRNA]</scope>
    <scope>CHARACTERIZATION</scope>
    <scope>SUBCELLULAR LOCATION</scope>
    <source>
        <tissue>Liver</tissue>
    </source>
</reference>
<reference key="2">
    <citation type="journal article" date="2005" name="Science">
        <title>The transcriptional landscape of the mammalian genome.</title>
        <authorList>
            <person name="Carninci P."/>
            <person name="Kasukawa T."/>
            <person name="Katayama S."/>
            <person name="Gough J."/>
            <person name="Frith M.C."/>
            <person name="Maeda N."/>
            <person name="Oyama R."/>
            <person name="Ravasi T."/>
            <person name="Lenhard B."/>
            <person name="Wells C."/>
            <person name="Kodzius R."/>
            <person name="Shimokawa K."/>
            <person name="Bajic V.B."/>
            <person name="Brenner S.E."/>
            <person name="Batalov S."/>
            <person name="Forrest A.R."/>
            <person name="Zavolan M."/>
            <person name="Davis M.J."/>
            <person name="Wilming L.G."/>
            <person name="Aidinis V."/>
            <person name="Allen J.E."/>
            <person name="Ambesi-Impiombato A."/>
            <person name="Apweiler R."/>
            <person name="Aturaliya R.N."/>
            <person name="Bailey T.L."/>
            <person name="Bansal M."/>
            <person name="Baxter L."/>
            <person name="Beisel K.W."/>
            <person name="Bersano T."/>
            <person name="Bono H."/>
            <person name="Chalk A.M."/>
            <person name="Chiu K.P."/>
            <person name="Choudhary V."/>
            <person name="Christoffels A."/>
            <person name="Clutterbuck D.R."/>
            <person name="Crowe M.L."/>
            <person name="Dalla E."/>
            <person name="Dalrymple B.P."/>
            <person name="de Bono B."/>
            <person name="Della Gatta G."/>
            <person name="di Bernardo D."/>
            <person name="Down T."/>
            <person name="Engstrom P."/>
            <person name="Fagiolini M."/>
            <person name="Faulkner G."/>
            <person name="Fletcher C.F."/>
            <person name="Fukushima T."/>
            <person name="Furuno M."/>
            <person name="Futaki S."/>
            <person name="Gariboldi M."/>
            <person name="Georgii-Hemming P."/>
            <person name="Gingeras T.R."/>
            <person name="Gojobori T."/>
            <person name="Green R.E."/>
            <person name="Gustincich S."/>
            <person name="Harbers M."/>
            <person name="Hayashi Y."/>
            <person name="Hensch T.K."/>
            <person name="Hirokawa N."/>
            <person name="Hill D."/>
            <person name="Huminiecki L."/>
            <person name="Iacono M."/>
            <person name="Ikeo K."/>
            <person name="Iwama A."/>
            <person name="Ishikawa T."/>
            <person name="Jakt M."/>
            <person name="Kanapin A."/>
            <person name="Katoh M."/>
            <person name="Kawasawa Y."/>
            <person name="Kelso J."/>
            <person name="Kitamura H."/>
            <person name="Kitano H."/>
            <person name="Kollias G."/>
            <person name="Krishnan S.P."/>
            <person name="Kruger A."/>
            <person name="Kummerfeld S.K."/>
            <person name="Kurochkin I.V."/>
            <person name="Lareau L.F."/>
            <person name="Lazarevic D."/>
            <person name="Lipovich L."/>
            <person name="Liu J."/>
            <person name="Liuni S."/>
            <person name="McWilliam S."/>
            <person name="Madan Babu M."/>
            <person name="Madera M."/>
            <person name="Marchionni L."/>
            <person name="Matsuda H."/>
            <person name="Matsuzawa S."/>
            <person name="Miki H."/>
            <person name="Mignone F."/>
            <person name="Miyake S."/>
            <person name="Morris K."/>
            <person name="Mottagui-Tabar S."/>
            <person name="Mulder N."/>
            <person name="Nakano N."/>
            <person name="Nakauchi H."/>
            <person name="Ng P."/>
            <person name="Nilsson R."/>
            <person name="Nishiguchi S."/>
            <person name="Nishikawa S."/>
            <person name="Nori F."/>
            <person name="Ohara O."/>
            <person name="Okazaki Y."/>
            <person name="Orlando V."/>
            <person name="Pang K.C."/>
            <person name="Pavan W.J."/>
            <person name="Pavesi G."/>
            <person name="Pesole G."/>
            <person name="Petrovsky N."/>
            <person name="Piazza S."/>
            <person name="Reed J."/>
            <person name="Reid J.F."/>
            <person name="Ring B.Z."/>
            <person name="Ringwald M."/>
            <person name="Rost B."/>
            <person name="Ruan Y."/>
            <person name="Salzberg S.L."/>
            <person name="Sandelin A."/>
            <person name="Schneider C."/>
            <person name="Schoenbach C."/>
            <person name="Sekiguchi K."/>
            <person name="Semple C.A."/>
            <person name="Seno S."/>
            <person name="Sessa L."/>
            <person name="Sheng Y."/>
            <person name="Shibata Y."/>
            <person name="Shimada H."/>
            <person name="Shimada K."/>
            <person name="Silva D."/>
            <person name="Sinclair B."/>
            <person name="Sperling S."/>
            <person name="Stupka E."/>
            <person name="Sugiura K."/>
            <person name="Sultana R."/>
            <person name="Takenaka Y."/>
            <person name="Taki K."/>
            <person name="Tammoja K."/>
            <person name="Tan S.L."/>
            <person name="Tang S."/>
            <person name="Taylor M.S."/>
            <person name="Tegner J."/>
            <person name="Teichmann S.A."/>
            <person name="Ueda H.R."/>
            <person name="van Nimwegen E."/>
            <person name="Verardo R."/>
            <person name="Wei C.L."/>
            <person name="Yagi K."/>
            <person name="Yamanishi H."/>
            <person name="Zabarovsky E."/>
            <person name="Zhu S."/>
            <person name="Zimmer A."/>
            <person name="Hide W."/>
            <person name="Bult C."/>
            <person name="Grimmond S.M."/>
            <person name="Teasdale R.D."/>
            <person name="Liu E.T."/>
            <person name="Brusic V."/>
            <person name="Quackenbush J."/>
            <person name="Wahlestedt C."/>
            <person name="Mattick J.S."/>
            <person name="Hume D.A."/>
            <person name="Kai C."/>
            <person name="Sasaki D."/>
            <person name="Tomaru Y."/>
            <person name="Fukuda S."/>
            <person name="Kanamori-Katayama M."/>
            <person name="Suzuki M."/>
            <person name="Aoki J."/>
            <person name="Arakawa T."/>
            <person name="Iida J."/>
            <person name="Imamura K."/>
            <person name="Itoh M."/>
            <person name="Kato T."/>
            <person name="Kawaji H."/>
            <person name="Kawagashira N."/>
            <person name="Kawashima T."/>
            <person name="Kojima M."/>
            <person name="Kondo S."/>
            <person name="Konno H."/>
            <person name="Nakano K."/>
            <person name="Ninomiya N."/>
            <person name="Nishio T."/>
            <person name="Okada M."/>
            <person name="Plessy C."/>
            <person name="Shibata K."/>
            <person name="Shiraki T."/>
            <person name="Suzuki S."/>
            <person name="Tagami M."/>
            <person name="Waki K."/>
            <person name="Watahiki A."/>
            <person name="Okamura-Oho Y."/>
            <person name="Suzuki H."/>
            <person name="Kawai J."/>
            <person name="Hayashizaki Y."/>
        </authorList>
    </citation>
    <scope>NUCLEOTIDE SEQUENCE [LARGE SCALE MRNA]</scope>
    <source>
        <strain>C57BL/6J</strain>
        <tissue>Liver</tissue>
        <tissue>Spinal cord</tissue>
    </source>
</reference>
<reference key="3">
    <citation type="journal article" date="2004" name="Genome Res.">
        <title>The status, quality, and expansion of the NIH full-length cDNA project: the Mammalian Gene Collection (MGC).</title>
        <authorList>
            <consortium name="The MGC Project Team"/>
        </authorList>
    </citation>
    <scope>NUCLEOTIDE SEQUENCE [LARGE SCALE MRNA]</scope>
    <source>
        <strain>FVB/N</strain>
        <tissue>Mammary tumor</tissue>
    </source>
</reference>
<reference key="4">
    <citation type="submission" date="2007-04" db="UniProtKB">
        <authorList>
            <person name="Lubec G."/>
            <person name="Kang S.U."/>
        </authorList>
    </citation>
    <scope>PROTEIN SEQUENCE OF 276-294 AND 361-378</scope>
    <scope>IDENTIFICATION BY MASS SPECTROMETRY</scope>
    <source>
        <strain>C57BL/6J</strain>
        <tissue>Brain</tissue>
    </source>
</reference>
<reference key="5">
    <citation type="journal article" date="2007" name="Cell">
        <title>LIMP-2 is a receptor for lysosomal mannose-6-phosphate-independent targeting of beta-glucocerebrosidase.</title>
        <authorList>
            <person name="Reczek D."/>
            <person name="Schwake M."/>
            <person name="Schroder J."/>
            <person name="Hughes H."/>
            <person name="Blanz J."/>
            <person name="Jin X."/>
            <person name="Brondyk W."/>
            <person name="Van Patten S."/>
            <person name="Edmunds T."/>
            <person name="Saftig P."/>
        </authorList>
    </citation>
    <scope>FUNCTION</scope>
    <scope>INTERACTION WITH GBA1</scope>
</reference>
<reference key="6">
    <citation type="journal article" date="2009" name="Nat. Biotechnol.">
        <title>Mass-spectrometric identification and relative quantification of N-linked cell surface glycoproteins.</title>
        <authorList>
            <person name="Wollscheid B."/>
            <person name="Bausch-Fluck D."/>
            <person name="Henderson C."/>
            <person name="O'Brien R."/>
            <person name="Bibel M."/>
            <person name="Schiess R."/>
            <person name="Aebersold R."/>
            <person name="Watts J.D."/>
        </authorList>
    </citation>
    <scope>GLYCOSYLATION [LARGE SCALE ANALYSIS] AT ASN-105</scope>
</reference>
<reference key="7">
    <citation type="journal article" date="2010" name="Cell">
        <title>A tissue-specific atlas of mouse protein phosphorylation and expression.</title>
        <authorList>
            <person name="Huttlin E.L."/>
            <person name="Jedrychowski M.P."/>
            <person name="Elias J.E."/>
            <person name="Goswami T."/>
            <person name="Rad R."/>
            <person name="Beausoleil S.A."/>
            <person name="Villen J."/>
            <person name="Haas W."/>
            <person name="Sowa M.E."/>
            <person name="Gygi S.P."/>
        </authorList>
    </citation>
    <scope>IDENTIFICATION BY MASS SPECTROMETRY [LARGE SCALE ANALYSIS]</scope>
    <source>
        <tissue>Brain</tissue>
        <tissue>Brown adipose tissue</tissue>
        <tissue>Heart</tissue>
        <tissue>Kidney</tissue>
        <tissue>Liver</tissue>
        <tissue>Lung</tissue>
        <tissue>Spleen</tissue>
        <tissue>Testis</tissue>
    </source>
</reference>
<reference key="8">
    <citation type="journal article" date="2013" name="Nature">
        <title>Structure of LIMP-2 provides functional insights with implications for SR-BI and CD36.</title>
        <authorList>
            <person name="Neculai D."/>
            <person name="Schwake M."/>
            <person name="Ravichandran M."/>
            <person name="Zunke F."/>
            <person name="Collins R.F."/>
            <person name="Peters J."/>
            <person name="Neculai M."/>
            <person name="Plumb J."/>
            <person name="Loppnau P."/>
            <person name="Pizarro J.C."/>
            <person name="Seitova A."/>
            <person name="Trimble W.S."/>
            <person name="Saftig P."/>
            <person name="Grinstein S."/>
            <person name="Dhe-Paganon S."/>
        </authorList>
    </citation>
    <scope>FUNCTION</scope>
    <scope>INTERACTION WITH GBA1</scope>
    <scope>SUBCELLULAR LOCATION</scope>
    <scope>REGION</scope>
    <scope>MUTAGENESIS OF ASN-45; ASN-68; ASN-105; ASN-122; LEU-155; ILE-156; MET-159; LEU-160; ALA-162; TYR-163; LYS-166; ILE-184; LEU-187; PHE-191; ASN-206; ASN-224; ASN-249; ASN-304; ASN-325; ASP-400; ASN-412 AND ASN-430</scope>
</reference>
<evidence type="ECO:0000250" key="1"/>
<evidence type="ECO:0000255" key="2"/>
<evidence type="ECO:0000269" key="3">
    <source>
    </source>
</evidence>
<evidence type="ECO:0000269" key="4">
    <source>
    </source>
</evidence>
<evidence type="ECO:0000269" key="5">
    <source>
    </source>
</evidence>
<evidence type="ECO:0000269" key="6">
    <source>
    </source>
</evidence>
<evidence type="ECO:0000305" key="7"/>
<name>SCRB2_MOUSE</name>